<accession>A4YF02</accession>
<proteinExistence type="inferred from homology"/>
<evidence type="ECO:0000255" key="1">
    <source>
        <dbReference type="HAMAP-Rule" id="MF_01032"/>
    </source>
</evidence>
<name>LEUD_METS5</name>
<gene>
    <name evidence="1" type="primary">leuD</name>
    <name type="ordered locus">Msed_0829</name>
</gene>
<keyword id="KW-0028">Amino-acid biosynthesis</keyword>
<keyword id="KW-0100">Branched-chain amino acid biosynthesis</keyword>
<keyword id="KW-0432">Leucine biosynthesis</keyword>
<keyword id="KW-0456">Lyase</keyword>
<keyword id="KW-1185">Reference proteome</keyword>
<reference key="1">
    <citation type="journal article" date="2008" name="Appl. Environ. Microbiol.">
        <title>The genome sequence of the metal-mobilizing, extremely thermoacidophilic archaeon Metallosphaera sedula provides insights into bioleaching-associated metabolism.</title>
        <authorList>
            <person name="Auernik K.S."/>
            <person name="Maezato Y."/>
            <person name="Blum P.H."/>
            <person name="Kelly R.M."/>
        </authorList>
    </citation>
    <scope>NUCLEOTIDE SEQUENCE [LARGE SCALE GENOMIC DNA]</scope>
    <source>
        <strain>ATCC 51363 / DSM 5348 / JCM 9185 / NBRC 15509 / TH2</strain>
    </source>
</reference>
<sequence>MIVEGPVLKYGDKIDTDIIIPARHLKYTDPAYLAQHAMEPLDPEFYKKASKGVVIVAGKVFGMGSSREQAAIALKAAGVKAVIAESFARIFYRNCINNGLPLITLPNATKEINEGDVVKINVETGEITVNGRVLKGKGITGMALDILKSGGIMEYLKKVSA</sequence>
<feature type="chain" id="PRO_1000072968" description="3-isopropylmalate dehydratase small subunit">
    <location>
        <begin position="1"/>
        <end position="161"/>
    </location>
</feature>
<organism>
    <name type="scientific">Metallosphaera sedula (strain ATCC 51363 / DSM 5348 / JCM 9185 / NBRC 15509 / TH2)</name>
    <dbReference type="NCBI Taxonomy" id="399549"/>
    <lineage>
        <taxon>Archaea</taxon>
        <taxon>Thermoproteota</taxon>
        <taxon>Thermoprotei</taxon>
        <taxon>Sulfolobales</taxon>
        <taxon>Sulfolobaceae</taxon>
        <taxon>Metallosphaera</taxon>
    </lineage>
</organism>
<dbReference type="EC" id="4.2.1.33" evidence="1"/>
<dbReference type="EMBL" id="CP000682">
    <property type="protein sequence ID" value="ABP95004.1"/>
    <property type="molecule type" value="Genomic_DNA"/>
</dbReference>
<dbReference type="RefSeq" id="WP_012020791.1">
    <property type="nucleotide sequence ID" value="NZ_CP139956.1"/>
</dbReference>
<dbReference type="SMR" id="A4YF02"/>
<dbReference type="STRING" id="399549.Msed_0829"/>
<dbReference type="KEGG" id="mse:Msed_0829"/>
<dbReference type="eggNOG" id="arCOG02230">
    <property type="taxonomic scope" value="Archaea"/>
</dbReference>
<dbReference type="HOGENOM" id="CLU_081378_1_1_2"/>
<dbReference type="UniPathway" id="UPA00048">
    <property type="reaction ID" value="UER00071"/>
</dbReference>
<dbReference type="Proteomes" id="UP000000242">
    <property type="component" value="Chromosome"/>
</dbReference>
<dbReference type="GO" id="GO:0003861">
    <property type="term" value="F:3-isopropylmalate dehydratase activity"/>
    <property type="evidence" value="ECO:0007669"/>
    <property type="project" value="UniProtKB-UniRule"/>
</dbReference>
<dbReference type="GO" id="GO:0009098">
    <property type="term" value="P:L-leucine biosynthetic process"/>
    <property type="evidence" value="ECO:0007669"/>
    <property type="project" value="UniProtKB-UniRule"/>
</dbReference>
<dbReference type="CDD" id="cd01577">
    <property type="entry name" value="IPMI_Swivel"/>
    <property type="match status" value="1"/>
</dbReference>
<dbReference type="Gene3D" id="3.20.19.10">
    <property type="entry name" value="Aconitase, domain 4"/>
    <property type="match status" value="1"/>
</dbReference>
<dbReference type="HAMAP" id="MF_01032">
    <property type="entry name" value="LeuD_type2"/>
    <property type="match status" value="1"/>
</dbReference>
<dbReference type="InterPro" id="IPR015928">
    <property type="entry name" value="Aconitase/3IPM_dehydase_swvl"/>
</dbReference>
<dbReference type="InterPro" id="IPR000573">
    <property type="entry name" value="AconitaseA/IPMdHydase_ssu_swvl"/>
</dbReference>
<dbReference type="InterPro" id="IPR033940">
    <property type="entry name" value="IPMI_Swivel"/>
</dbReference>
<dbReference type="InterPro" id="IPR050075">
    <property type="entry name" value="LeuD"/>
</dbReference>
<dbReference type="InterPro" id="IPR011827">
    <property type="entry name" value="LeuD_type2/HacB/DmdB"/>
</dbReference>
<dbReference type="NCBIfam" id="TIGR02087">
    <property type="entry name" value="LEUD_arch"/>
    <property type="match status" value="1"/>
</dbReference>
<dbReference type="PANTHER" id="PTHR43345:SF2">
    <property type="entry name" value="3-ISOPROPYLMALATE DEHYDRATASE SMALL SUBUNIT 1"/>
    <property type="match status" value="1"/>
</dbReference>
<dbReference type="PANTHER" id="PTHR43345">
    <property type="entry name" value="3-ISOPROPYLMALATE DEHYDRATASE SMALL SUBUNIT 2-RELATED-RELATED"/>
    <property type="match status" value="1"/>
</dbReference>
<dbReference type="Pfam" id="PF00694">
    <property type="entry name" value="Aconitase_C"/>
    <property type="match status" value="1"/>
</dbReference>
<dbReference type="SUPFAM" id="SSF52016">
    <property type="entry name" value="LeuD/IlvD-like"/>
    <property type="match status" value="1"/>
</dbReference>
<protein>
    <recommendedName>
        <fullName evidence="1">3-isopropylmalate dehydratase small subunit</fullName>
        <ecNumber evidence="1">4.2.1.33</ecNumber>
    </recommendedName>
    <alternativeName>
        <fullName evidence="1">Alpha-IPM isomerase</fullName>
        <shortName evidence="1">IPMI</shortName>
    </alternativeName>
    <alternativeName>
        <fullName evidence="1">Isopropylmalate isomerase</fullName>
    </alternativeName>
</protein>
<comment type="function">
    <text evidence="1">Catalyzes the isomerization between 2-isopropylmalate and 3-isopropylmalate, via the formation of 2-isopropylmaleate.</text>
</comment>
<comment type="catalytic activity">
    <reaction evidence="1">
        <text>(2R,3S)-3-isopropylmalate = (2S)-2-isopropylmalate</text>
        <dbReference type="Rhea" id="RHEA:32287"/>
        <dbReference type="ChEBI" id="CHEBI:1178"/>
        <dbReference type="ChEBI" id="CHEBI:35121"/>
        <dbReference type="EC" id="4.2.1.33"/>
    </reaction>
</comment>
<comment type="pathway">
    <text evidence="1">Amino-acid biosynthesis; L-leucine biosynthesis; L-leucine from 3-methyl-2-oxobutanoate: step 2/4.</text>
</comment>
<comment type="subunit">
    <text evidence="1">Heterodimer of LeuC and LeuD.</text>
</comment>
<comment type="similarity">
    <text evidence="1">Belongs to the LeuD family. LeuD type 2 subfamily.</text>
</comment>